<sequence>MQLFHLCLIISCSCPTVQASKLCLGWLWDMDIDPYKEFGATVQLLSFLPHDFFPSVRDLLDTASALFRDALESPEHCSPHHTALRQAILCWGELMTLATWVGANLQDPASRELVVTYVNINMGLKFRQLLWFHISCLTFGRETVIEYLVSFGVWIRTPQAYRPPNAPILSTLPETTVVRRRGRSPRRRTPSPRRRRSQSPRRRRSQSRESQC</sequence>
<evidence type="ECO:0000250" key="1"/>
<evidence type="ECO:0000255" key="2">
    <source>
        <dbReference type="HAMAP-Rule" id="MF_04076"/>
    </source>
</evidence>
<evidence type="ECO:0000256" key="3">
    <source>
        <dbReference type="SAM" id="MobiDB-lite"/>
    </source>
</evidence>
<keyword id="KW-0024">Alternative initiation</keyword>
<keyword id="KW-1015">Disulfide bond</keyword>
<keyword id="KW-1048">Host nucleus</keyword>
<keyword id="KW-0945">Host-virus interaction</keyword>
<keyword id="KW-0677">Repeat</keyword>
<keyword id="KW-0964">Secreted</keyword>
<keyword id="KW-0732">Signal</keyword>
<keyword id="KW-0899">Viral immunoevasion</keyword>
<dbReference type="EMBL" id="AF043594">
    <property type="protein sequence ID" value="AAC40809.1"/>
    <property type="molecule type" value="Genomic_DNA"/>
</dbReference>
<dbReference type="SMR" id="O92920"/>
<dbReference type="Proteomes" id="UP000008283">
    <property type="component" value="Genome"/>
</dbReference>
<dbReference type="GO" id="GO:0005576">
    <property type="term" value="C:extracellular region"/>
    <property type="evidence" value="ECO:0007669"/>
    <property type="project" value="UniProtKB-SubCell"/>
</dbReference>
<dbReference type="GO" id="GO:0043657">
    <property type="term" value="C:host cell"/>
    <property type="evidence" value="ECO:0007669"/>
    <property type="project" value="GOC"/>
</dbReference>
<dbReference type="GO" id="GO:0030430">
    <property type="term" value="C:host cell cytoplasm"/>
    <property type="evidence" value="ECO:0007669"/>
    <property type="project" value="UniProtKB-UniRule"/>
</dbReference>
<dbReference type="GO" id="GO:0042025">
    <property type="term" value="C:host cell nucleus"/>
    <property type="evidence" value="ECO:0007669"/>
    <property type="project" value="UniProtKB-SubCell"/>
</dbReference>
<dbReference type="GO" id="GO:0039619">
    <property type="term" value="C:T=4 icosahedral viral capsid"/>
    <property type="evidence" value="ECO:0007669"/>
    <property type="project" value="UniProtKB-UniRule"/>
</dbReference>
<dbReference type="GO" id="GO:0003677">
    <property type="term" value="F:DNA binding"/>
    <property type="evidence" value="ECO:0007669"/>
    <property type="project" value="UniProtKB-UniRule"/>
</dbReference>
<dbReference type="GO" id="GO:0003723">
    <property type="term" value="F:RNA binding"/>
    <property type="evidence" value="ECO:0007669"/>
    <property type="project" value="UniProtKB-UniRule"/>
</dbReference>
<dbReference type="GO" id="GO:0005198">
    <property type="term" value="F:structural molecule activity"/>
    <property type="evidence" value="ECO:0007669"/>
    <property type="project" value="UniProtKB-UniRule"/>
</dbReference>
<dbReference type="GO" id="GO:0075521">
    <property type="term" value="P:microtubule-dependent intracellular transport of viral material towards nucleus"/>
    <property type="evidence" value="ECO:0007669"/>
    <property type="project" value="UniProtKB-UniRule"/>
</dbReference>
<dbReference type="GO" id="GO:0046718">
    <property type="term" value="P:symbiont entry into host cell"/>
    <property type="evidence" value="ECO:0007669"/>
    <property type="project" value="UniProtKB-UniRule"/>
</dbReference>
<dbReference type="GO" id="GO:0075732">
    <property type="term" value="P:viral penetration into host nucleus"/>
    <property type="evidence" value="ECO:0007669"/>
    <property type="project" value="UniProtKB-UniRule"/>
</dbReference>
<dbReference type="FunFam" id="1.10.4090.10:FF:000001">
    <property type="entry name" value="Capsid protein"/>
    <property type="match status" value="1"/>
</dbReference>
<dbReference type="Gene3D" id="1.10.4090.10">
    <property type="entry name" value="Viral capsid, core domain supefamily, Hepatitis B virus"/>
    <property type="match status" value="1"/>
</dbReference>
<dbReference type="HAMAP" id="MF_04076">
    <property type="entry name" value="HBV_HBEAG"/>
    <property type="match status" value="1"/>
</dbReference>
<dbReference type="InterPro" id="IPR013195">
    <property type="entry name" value="Hepatitis_B_virus_capsid_N"/>
</dbReference>
<dbReference type="InterPro" id="IPR002006">
    <property type="entry name" value="Hepatitis_core"/>
</dbReference>
<dbReference type="InterPro" id="IPR036459">
    <property type="entry name" value="Viral_capsid_core_dom_sf_HBV"/>
</dbReference>
<dbReference type="Pfam" id="PF08290">
    <property type="entry name" value="Hep_core_N"/>
    <property type="match status" value="1"/>
</dbReference>
<dbReference type="Pfam" id="PF00906">
    <property type="entry name" value="Hepatitis_core"/>
    <property type="match status" value="2"/>
</dbReference>
<dbReference type="SUPFAM" id="SSF47852">
    <property type="entry name" value="Hepatitis B viral capsid (hbcag)"/>
    <property type="match status" value="1"/>
</dbReference>
<gene>
    <name evidence="2" type="primary">C</name>
</gene>
<proteinExistence type="inferred from homology"/>
<reference key="1">
    <citation type="journal article" date="1998" name="Virology">
        <title>Analysis of hepatitis B virus populations in an interferon-alpha-treated patient reveals predominant mutations in the C-gene and changing e-antigenicity.</title>
        <authorList>
            <person name="Gunther S."/>
            <person name="Paulij W."/>
            <person name="Meisel H."/>
            <person name="Will H."/>
        </authorList>
    </citation>
    <scope>NUCLEOTIDE SEQUENCE [GENOMIC DNA]</scope>
</reference>
<protein>
    <recommendedName>
        <fullName evidence="2">External core antigen</fullName>
    </recommendedName>
    <alternativeName>
        <fullName evidence="2">HBeAg</fullName>
    </alternativeName>
    <alternativeName>
        <fullName evidence="2">Precore protein</fullName>
    </alternativeName>
    <alternativeName>
        <fullName evidence="2">p25</fullName>
    </alternativeName>
</protein>
<name>HBEAG_HBVD7</name>
<comment type="function">
    <text evidence="2">May regulate immune response to the intracellular capsid in acting as a T-cell tolerogen, by having an immunoregulatory effect which prevents destruction of infected cells by cytotoxic T-cells. This immune regulation may predispose to chronicity during perinatal infections and prevent severe liver injury during adult infections.</text>
</comment>
<comment type="subunit">
    <text evidence="2">Homodimerizes.</text>
</comment>
<comment type="subcellular location">
    <subcellularLocation>
        <location evidence="2">Secreted</location>
    </subcellularLocation>
    <subcellularLocation>
        <location evidence="2">Host nucleus</location>
    </subcellularLocation>
</comment>
<comment type="alternative products">
    <event type="alternative initiation"/>
    <isoform>
        <id>O92920-1</id>
        <name>External core antigen</name>
        <sequence type="displayed"/>
    </isoform>
    <isoform>
        <id>P0C6I3-1</id>
        <name>Capsid protein</name>
        <sequence type="external"/>
    </isoform>
</comment>
<comment type="PTM">
    <text evidence="2">Phosphorylated.</text>
</comment>
<comment type="PTM">
    <text evidence="2">Cleaved by host furin.</text>
</comment>
<comment type="similarity">
    <text evidence="2">Belongs to the orthohepadnavirus precore antigen family.</text>
</comment>
<feature type="signal peptide" evidence="2">
    <location>
        <begin position="1"/>
        <end position="19"/>
    </location>
</feature>
<feature type="chain" id="PRO_5000054061" description="External core antigen" evidence="2">
    <location>
        <begin position="20"/>
        <end position="212"/>
    </location>
</feature>
<feature type="propeptide" id="PRO_0000324731" evidence="1">
    <location>
        <begin position="184"/>
        <end position="212"/>
    </location>
</feature>
<feature type="repeat" description="1; half-length">
    <location>
        <begin position="184"/>
        <end position="190"/>
    </location>
</feature>
<feature type="repeat" description="2">
    <location>
        <begin position="191"/>
        <end position="198"/>
    </location>
</feature>
<feature type="repeat" description="3">
    <location>
        <begin position="199"/>
        <end position="206"/>
    </location>
</feature>
<feature type="region of interest" description="HBEAG" evidence="2">
    <location>
        <begin position="25"/>
        <end position="27"/>
    </location>
</feature>
<feature type="region of interest" description="Disordered" evidence="3">
    <location>
        <begin position="172"/>
        <end position="212"/>
    </location>
</feature>
<feature type="region of interest" description="3 X 8 AA repeats of S-P-R-R-R-R-S-Q">
    <location>
        <begin position="184"/>
        <end position="206"/>
    </location>
</feature>
<feature type="compositionally biased region" description="Basic residues" evidence="3">
    <location>
        <begin position="178"/>
        <end position="205"/>
    </location>
</feature>
<feature type="site" description="Cleavage; by host" evidence="2">
    <location>
        <begin position="183"/>
        <end position="184"/>
    </location>
</feature>
<feature type="disulfide bond" description="Interchain" evidence="2">
    <location>
        <position position="77"/>
    </location>
</feature>
<feature type="disulfide bond" description="Interchain" evidence="2">
    <location>
        <position position="90"/>
    </location>
</feature>
<organism>
    <name type="scientific">Hepatitis B virus genotype D (isolate Germany/1-91/1991)</name>
    <name type="common">HBV-D</name>
    <dbReference type="NCBI Taxonomy" id="489490"/>
    <lineage>
        <taxon>Viruses</taxon>
        <taxon>Riboviria</taxon>
        <taxon>Pararnavirae</taxon>
        <taxon>Artverviricota</taxon>
        <taxon>Revtraviricetes</taxon>
        <taxon>Blubervirales</taxon>
        <taxon>Hepadnaviridae</taxon>
        <taxon>Orthohepadnavirus</taxon>
        <taxon>Hepatitis B virus</taxon>
        <taxon>hepatitis B virus genotype D</taxon>
    </lineage>
</organism>
<accession>O92920</accession>
<organismHost>
    <name type="scientific">Homo sapiens</name>
    <name type="common">Human</name>
    <dbReference type="NCBI Taxonomy" id="9606"/>
</organismHost>
<organismHost>
    <name type="scientific">Pan troglodytes</name>
    <name type="common">Chimpanzee</name>
    <dbReference type="NCBI Taxonomy" id="9598"/>
</organismHost>